<organism>
    <name type="scientific">Rhizobium etli (strain CIAT 652)</name>
    <dbReference type="NCBI Taxonomy" id="491916"/>
    <lineage>
        <taxon>Bacteria</taxon>
        <taxon>Pseudomonadati</taxon>
        <taxon>Pseudomonadota</taxon>
        <taxon>Alphaproteobacteria</taxon>
        <taxon>Hyphomicrobiales</taxon>
        <taxon>Rhizobiaceae</taxon>
        <taxon>Rhizobium/Agrobacterium group</taxon>
        <taxon>Rhizobium</taxon>
    </lineage>
</organism>
<reference key="1">
    <citation type="journal article" date="2010" name="Appl. Environ. Microbiol.">
        <title>Conserved symbiotic plasmid DNA sequences in the multireplicon pangenomic structure of Rhizobium etli.</title>
        <authorList>
            <person name="Gonzalez V."/>
            <person name="Acosta J.L."/>
            <person name="Santamaria R.I."/>
            <person name="Bustos P."/>
            <person name="Fernandez J.L."/>
            <person name="Hernandez Gonzalez I.L."/>
            <person name="Diaz R."/>
            <person name="Flores M."/>
            <person name="Palacios R."/>
            <person name="Mora J."/>
            <person name="Davila G."/>
        </authorList>
    </citation>
    <scope>NUCLEOTIDE SEQUENCE [LARGE SCALE GENOMIC DNA]</scope>
    <source>
        <strain>CIAT 652</strain>
    </source>
</reference>
<dbReference type="EMBL" id="CP001074">
    <property type="protein sequence ID" value="ACE92491.1"/>
    <property type="molecule type" value="Genomic_DNA"/>
</dbReference>
<dbReference type="SMR" id="B3PXB0"/>
<dbReference type="KEGG" id="rec:RHECIAT_CH0003545"/>
<dbReference type="eggNOG" id="COG2371">
    <property type="taxonomic scope" value="Bacteria"/>
</dbReference>
<dbReference type="HOGENOM" id="CLU_093757_1_0_5"/>
<dbReference type="Proteomes" id="UP000008817">
    <property type="component" value="Chromosome"/>
</dbReference>
<dbReference type="GO" id="GO:0005737">
    <property type="term" value="C:cytoplasm"/>
    <property type="evidence" value="ECO:0007669"/>
    <property type="project" value="UniProtKB-SubCell"/>
</dbReference>
<dbReference type="GO" id="GO:0016151">
    <property type="term" value="F:nickel cation binding"/>
    <property type="evidence" value="ECO:0007669"/>
    <property type="project" value="UniProtKB-UniRule"/>
</dbReference>
<dbReference type="GO" id="GO:0051082">
    <property type="term" value="F:unfolded protein binding"/>
    <property type="evidence" value="ECO:0007669"/>
    <property type="project" value="UniProtKB-UniRule"/>
</dbReference>
<dbReference type="GO" id="GO:0006457">
    <property type="term" value="P:protein folding"/>
    <property type="evidence" value="ECO:0007669"/>
    <property type="project" value="InterPro"/>
</dbReference>
<dbReference type="GO" id="GO:0065003">
    <property type="term" value="P:protein-containing complex assembly"/>
    <property type="evidence" value="ECO:0007669"/>
    <property type="project" value="InterPro"/>
</dbReference>
<dbReference type="GO" id="GO:0019627">
    <property type="term" value="P:urea metabolic process"/>
    <property type="evidence" value="ECO:0007669"/>
    <property type="project" value="InterPro"/>
</dbReference>
<dbReference type="CDD" id="cd00571">
    <property type="entry name" value="UreE"/>
    <property type="match status" value="1"/>
</dbReference>
<dbReference type="Gene3D" id="2.60.260.20">
    <property type="entry name" value="Urease metallochaperone UreE, N-terminal domain"/>
    <property type="match status" value="1"/>
</dbReference>
<dbReference type="Gene3D" id="3.30.70.790">
    <property type="entry name" value="UreE, C-terminal domain"/>
    <property type="match status" value="1"/>
</dbReference>
<dbReference type="HAMAP" id="MF_00822">
    <property type="entry name" value="UreE"/>
    <property type="match status" value="1"/>
</dbReference>
<dbReference type="InterPro" id="IPR012406">
    <property type="entry name" value="UreE"/>
</dbReference>
<dbReference type="InterPro" id="IPR007864">
    <property type="entry name" value="UreE_C_dom"/>
</dbReference>
<dbReference type="InterPro" id="IPR004029">
    <property type="entry name" value="UreE_N"/>
</dbReference>
<dbReference type="InterPro" id="IPR036118">
    <property type="entry name" value="UreE_N_sf"/>
</dbReference>
<dbReference type="NCBIfam" id="NF009760">
    <property type="entry name" value="PRK13261.2-6"/>
    <property type="match status" value="1"/>
</dbReference>
<dbReference type="Pfam" id="PF05194">
    <property type="entry name" value="UreE_C"/>
    <property type="match status" value="1"/>
</dbReference>
<dbReference type="Pfam" id="PF02814">
    <property type="entry name" value="UreE_N"/>
    <property type="match status" value="1"/>
</dbReference>
<dbReference type="SMART" id="SM00988">
    <property type="entry name" value="UreE_N"/>
    <property type="match status" value="1"/>
</dbReference>
<dbReference type="SUPFAM" id="SSF69737">
    <property type="entry name" value="Urease metallochaperone UreE, C-terminal domain"/>
    <property type="match status" value="1"/>
</dbReference>
<dbReference type="SUPFAM" id="SSF69287">
    <property type="entry name" value="Urease metallochaperone UreE, N-terminal domain"/>
    <property type="match status" value="1"/>
</dbReference>
<keyword id="KW-0143">Chaperone</keyword>
<keyword id="KW-0963">Cytoplasm</keyword>
<keyword id="KW-0533">Nickel</keyword>
<name>UREE_RHIE6</name>
<sequence length="202" mass="22949">MQRVTSYLPAGTPSSHPTAQVKLPHDLRHLRRKLLHLENGEMVMLDLKDPVLFANGDLLVREDGELIEILAADEKLFEIRGRDRTHLVELAWHLGNRHLAAQIEEDRIVILRDHVIRNMLQGLGATVLEINEPFQPARGAYHSHGGHSHDHGHAAHDHGHAAHDHGHNHDHDHGHAHGHDHQHDHNCDHDHDHGHHHGHKHD</sequence>
<gene>
    <name evidence="1" type="primary">ureE</name>
    <name type="ordered locus">RHECIAT_CH0003545</name>
</gene>
<accession>B3PXB0</accession>
<protein>
    <recommendedName>
        <fullName evidence="1">Urease accessory protein UreE</fullName>
    </recommendedName>
</protein>
<evidence type="ECO:0000255" key="1">
    <source>
        <dbReference type="HAMAP-Rule" id="MF_00822"/>
    </source>
</evidence>
<evidence type="ECO:0000256" key="2">
    <source>
        <dbReference type="SAM" id="MobiDB-lite"/>
    </source>
</evidence>
<proteinExistence type="inferred from homology"/>
<feature type="chain" id="PRO_1000213117" description="Urease accessory protein UreE">
    <location>
        <begin position="1"/>
        <end position="202"/>
    </location>
</feature>
<feature type="region of interest" description="Disordered" evidence="2">
    <location>
        <begin position="138"/>
        <end position="202"/>
    </location>
</feature>
<feature type="compositionally biased region" description="Basic and acidic residues" evidence="2">
    <location>
        <begin position="147"/>
        <end position="193"/>
    </location>
</feature>
<comment type="function">
    <text evidence="1">Involved in urease metallocenter assembly. Binds nickel. Probably functions as a nickel donor during metallocenter assembly.</text>
</comment>
<comment type="subcellular location">
    <subcellularLocation>
        <location evidence="1">Cytoplasm</location>
    </subcellularLocation>
</comment>
<comment type="similarity">
    <text evidence="1">Belongs to the UreE family.</text>
</comment>